<evidence type="ECO:0000255" key="1"/>
<evidence type="ECO:0000269" key="2">
    <source>
    </source>
</evidence>
<evidence type="ECO:0000269" key="3">
    <source>
    </source>
</evidence>
<evidence type="ECO:0000269" key="4">
    <source>
    </source>
</evidence>
<evidence type="ECO:0000269" key="5">
    <source>
    </source>
</evidence>
<evidence type="ECO:0000269" key="6">
    <source>
    </source>
</evidence>
<evidence type="ECO:0000269" key="7">
    <source>
    </source>
</evidence>
<evidence type="ECO:0000269" key="8">
    <source>
    </source>
</evidence>
<evidence type="ECO:0000269" key="9">
    <source>
    </source>
</evidence>
<evidence type="ECO:0000269" key="10">
    <source>
    </source>
</evidence>
<evidence type="ECO:0000303" key="11">
    <source>
    </source>
</evidence>
<evidence type="ECO:0000303" key="12">
    <source>
    </source>
</evidence>
<evidence type="ECO:0000305" key="13"/>
<evidence type="ECO:0000305" key="14">
    <source>
    </source>
</evidence>
<evidence type="ECO:0007744" key="15">
    <source>
        <dbReference type="PDB" id="5HD9"/>
    </source>
</evidence>
<evidence type="ECO:0007744" key="16">
    <source>
        <dbReference type="PDB" id="6V1W"/>
    </source>
</evidence>
<evidence type="ECO:0007744" key="17">
    <source>
        <dbReference type="PDB" id="7CNB"/>
    </source>
</evidence>
<evidence type="ECO:0007744" key="18">
    <source>
        <dbReference type="PDB" id="7JQQ"/>
    </source>
</evidence>
<evidence type="ECO:0007829" key="19">
    <source>
        <dbReference type="PDB" id="5HD9"/>
    </source>
</evidence>
<evidence type="ECO:0007829" key="20">
    <source>
        <dbReference type="PDB" id="6V1W"/>
    </source>
</evidence>
<evidence type="ECO:0007829" key="21">
    <source>
        <dbReference type="PDB" id="7CNB"/>
    </source>
</evidence>
<reference key="1">
    <citation type="journal article" date="1986" name="Gene">
        <title>Nucleotide sequence of the late region of Bacillus phage phi 29 completes the 19,285-bp sequence of phi 29 genome. Comparison with the homologous sequence of phage PZA.</title>
        <authorList>
            <person name="Vlcek C."/>
            <person name="Paces V."/>
        </authorList>
    </citation>
    <scope>NUCLEOTIDE SEQUENCE [GENOMIC DNA]</scope>
</reference>
<reference key="2">
    <citation type="journal article" date="1985" name="Gene">
        <title>The complete sequence of Bacillus phage phi 29 gene 16: a protein required for the genome encapsidation reaction.</title>
        <authorList>
            <person name="Garvey K.J."/>
            <person name="Saedi M.S."/>
            <person name="Ito J."/>
        </authorList>
    </citation>
    <scope>NUCLEOTIDE SEQUENCE [GENOMIC DNA]</scope>
    <scope>FUNCTION</scope>
</reference>
<reference key="3">
    <citation type="submission" date="2008-05" db="EMBL/GenBank/DDBJ databases">
        <authorList>
            <person name="Villegas A.P."/>
            <person name="Lingohr E.J."/>
            <person name="Ceyssens P.-J."/>
            <person name="Kropinski A.M."/>
        </authorList>
    </citation>
    <scope>NUCLEOTIDE SEQUENCE [GENOMIC DNA]</scope>
</reference>
<reference key="4">
    <citation type="journal article" date="1987" name="J. Mol. Biol.">
        <title>Prohead and DNA-gp3-dependent ATPase activity of the DNA packaging protein gp16 of bacteriophage phi 29.</title>
        <authorList>
            <person name="Guo P."/>
            <person name="Peterson C."/>
            <person name="Anderson D."/>
        </authorList>
    </citation>
    <scope>FUNCTION</scope>
</reference>
<reference key="5">
    <citation type="journal article" date="1997" name="J. Mol. Biol.">
        <title>The bacteriophage phi29 packaging proteins supercoil the DNA ends.</title>
        <authorList>
            <person name="Grimes S."/>
            <person name="Anderson D."/>
        </authorList>
    </citation>
    <scope>IDENTIFICATION IN A DNA-GP3-GP16 COMPLEX</scope>
</reference>
<reference key="6">
    <citation type="journal article" date="2000" name="Nature">
        <title>Structure of the bacteriophage phi29 DNA packaging motor.</title>
        <authorList>
            <person name="Simpson A.A."/>
            <person name="Tao Y."/>
            <person name="Leiman P.G."/>
            <person name="Badasso M.O."/>
            <person name="He Y."/>
            <person name="Jardine P.J."/>
            <person name="Olson N.H."/>
            <person name="Morais M.C."/>
            <person name="Grimes S."/>
            <person name="Anderson D.L."/>
            <person name="Baker T.S."/>
            <person name="Rossmann M.G."/>
        </authorList>
    </citation>
    <scope>FUNCTION</scope>
</reference>
<reference key="7">
    <citation type="journal article" date="2008" name="J. Mol. Biol.">
        <title>DNA packaging motor assembly intermediate of bacteriophage phi29.</title>
        <authorList>
            <person name="Koti J.S."/>
            <person name="Morais M.C."/>
            <person name="Rajagopal R."/>
            <person name="Owen B.A."/>
            <person name="McMurray C.T."/>
            <person name="Anderson D.L."/>
        </authorList>
    </citation>
    <scope>FUNCTION</scope>
    <scope>INTERACTION WITH PACKAGING RNA</scope>
    <scope>MUTAGENESIS OF ASP-118 AND GLU-119</scope>
</reference>
<reference key="8">
    <citation type="journal article" date="2013" name="Curr. Opin. Biotechnol.">
        <title>Ultrastable pRNA hexameric ring gearing hexameric phi29 DNA-packaging motor by revolving without rotating and coiling.</title>
        <authorList>
            <person name="Schwartz C."/>
            <person name="Guo P."/>
        </authorList>
    </citation>
    <scope>REVIEW</scope>
</reference>
<reference key="9">
    <citation type="journal article" date="2013" name="Virology">
        <title>The ATPase of the phi29 DNA packaging motor is a member of the hexameric AAA+ superfamily.</title>
        <authorList>
            <person name="Schwartz C."/>
            <person name="De Donatis G.M."/>
            <person name="Fang H."/>
            <person name="Guo P."/>
        </authorList>
    </citation>
    <scope>CATALYTIC ACTIVITY</scope>
</reference>
<reference evidence="15" key="10">
    <citation type="journal article" date="2016" name="Cell Rep.">
        <title>Structural and Molecular Basis for Coordination in a Viral DNA Packaging Motor.</title>
        <authorList>
            <person name="Mao H."/>
            <person name="Saha M."/>
            <person name="Reyes-Aldrete E."/>
            <person name="Sherman M.B."/>
            <person name="Woodson M."/>
            <person name="Atz R."/>
            <person name="Grimes S."/>
            <person name="Jardine P.J."/>
            <person name="Morais M.C."/>
        </authorList>
    </citation>
    <scope>X-RAY CRYSTALLOGRAPHY (1.94 ANGSTROMS) OF 4-197</scope>
    <scope>STRUCTURE BY ELECTRON MICROSCOPY (12.0 ANGSTROMS)</scope>
    <scope>SUBUNIT</scope>
    <scope>MUTAGENESIS OF ARG-122 AND LYS-124</scope>
    <scope>DOMAIN</scope>
    <scope>FUNCTION</scope>
</reference>
<reference evidence="16" key="11">
    <citation type="journal article" date="2020" name="Nucleic Acids Res.">
        <title>NMR structure of a vestigial nuclease provides insight into the evolution of functional transitions in viral dsDNA packaging motors.</title>
        <authorList>
            <person name="Mahler B.P."/>
            <person name="Bujalowski P.J."/>
            <person name="Mao H."/>
            <person name="Dill E.A."/>
            <person name="Jardine P.J."/>
            <person name="Choi K.H."/>
            <person name="Morais M.C."/>
        </authorList>
    </citation>
    <scope>STRUCTURE BY NMR OF 222-332</scope>
    <scope>DOMAIN</scope>
    <scope>MUTAGENESIS OF ARG-327; LYS-328 AND ARG-330</scope>
</reference>
<reference evidence="17" key="12">
    <citation type="journal article" date="2021" name="Biochemistry">
        <title>Structural Insights into gp16 ATPase in the Bacteriophage 29 DNA Packaging Motor.</title>
        <authorList>
            <person name="Saeed A.F.U.H."/>
            <person name="Chan C."/>
            <person name="Guan H."/>
            <person name="Gong B."/>
            <person name="Guo P."/>
            <person name="Cheng X."/>
            <person name="Ouyang S."/>
        </authorList>
    </citation>
    <scope>X-RAY CRYSTALLOGRAPHY (2.32 ANGSTROMS) OF 226-332</scope>
</reference>
<reference evidence="18" key="13">
    <citation type="journal article" date="2021" name="Sci. Adv.">
        <title>A viral genome packaging motor transitions between cyclic and helical symmetry to translocate dsDNA.</title>
        <authorList>
            <person name="Woodson M."/>
            <person name="Pajak J."/>
            <person name="Mahler B.P."/>
            <person name="Zhao W."/>
            <person name="Zhang W."/>
            <person name="Arya G."/>
            <person name="White M.A."/>
            <person name="Jardine P.J."/>
            <person name="Morais M.C."/>
        </authorList>
    </citation>
    <scope>STRUCTURE BY ELECTRON MICROSCOPY (4.10 ANGSTROMS)</scope>
    <scope>SUBUNIT</scope>
</reference>
<organism>
    <name type="scientific">Bacillus phage phi29</name>
    <name type="common">Bacteriophage phi-29</name>
    <dbReference type="NCBI Taxonomy" id="2884424"/>
    <lineage>
        <taxon>Viruses</taxon>
        <taxon>Duplodnaviria</taxon>
        <taxon>Heunggongvirae</taxon>
        <taxon>Uroviricota</taxon>
        <taxon>Caudoviricetes</taxon>
        <taxon>Salasmaviridae</taxon>
        <taxon>Picovirinae</taxon>
        <taxon>Salasvirus</taxon>
        <taxon>Salasvirus phi29</taxon>
    </lineage>
</organism>
<keyword id="KW-0002">3D-structure</keyword>
<keyword id="KW-0067">ATP-binding</keyword>
<keyword id="KW-0238">DNA-binding</keyword>
<keyword id="KW-0378">Hydrolase</keyword>
<keyword id="KW-0426">Late protein</keyword>
<keyword id="KW-0547">Nucleotide-binding</keyword>
<keyword id="KW-1185">Reference proteome</keyword>
<keyword id="KW-0694">RNA-binding</keyword>
<keyword id="KW-0231">Viral genome packaging</keyword>
<keyword id="KW-1188">Viral release from host cell</keyword>
<protein>
    <recommendedName>
        <fullName evidence="12">DNA packaging protein</fullName>
    </recommendedName>
    <alternativeName>
        <fullName evidence="11">ATPase gp16</fullName>
        <ecNumber evidence="4">3.6.4.-</ecNumber>
    </alternativeName>
    <alternativeName>
        <fullName>Gene product 16</fullName>
        <shortName>gp16</shortName>
    </alternativeName>
    <alternativeName>
        <fullName>Protein p16</fullName>
    </alternativeName>
</protein>
<sequence length="332" mass="38965">MDKSLFYNPQKMLSYDRILNFVIGARGIGKSYAMKVYPINRFIKYGEQFIYVRRYKPELAKVSNYFNDVAQEFPDHELVVKGRRFYIDGKLAGWAIPLSVWQSEKSNAYPNVSTIVFDEFIREKDNSNYIPNEVSALLNLMDTVFRNRERVRCICLSNAVSVVNPYFLFFNLVPDVNKRFNVYDDALIEIPDSLDFSSERRKTRFGRLIDGTEYGEMSLDNQFIGDSQVFIEKRSKDSKFVFSIVYNGFTLGVWVDVNQGLMYIDTAHDPSTKNVYTLTTDDLNENMMLITNYKNNYHLRKLASAFMNGYLRFDNQVIRNIAYELFRKMRIQ</sequence>
<gene>
    <name type="primary">16</name>
</gene>
<accession>P11014</accession>
<accession>B3VMQ2</accession>
<feature type="chain" id="PRO_0000106601" description="DNA packaging protein">
    <location>
        <begin position="1"/>
        <end position="332"/>
    </location>
</feature>
<feature type="region of interest" description="ATPase" evidence="7">
    <location>
        <begin position="1"/>
        <end position="207"/>
    </location>
</feature>
<feature type="region of interest" description="DNA-binding" evidence="7">
    <location>
        <begin position="233"/>
        <end position="332"/>
    </location>
</feature>
<feature type="binding site" evidence="1">
    <location>
        <begin position="24"/>
        <end position="31"/>
    </location>
    <ligand>
        <name>ATP</name>
        <dbReference type="ChEBI" id="CHEBI:30616"/>
    </ligand>
</feature>
<feature type="mutagenesis site" description="Complete loss of DNA packaging activity." evidence="3">
    <original>D</original>
    <variation>E</variation>
    <location>
        <position position="118"/>
    </location>
</feature>
<feature type="mutagenesis site" description="Complete loss of DNA packaging activity." evidence="3">
    <original>E</original>
    <variation>D</variation>
    <location>
        <position position="119"/>
    </location>
</feature>
<feature type="mutagenesis site" description="Complete loss of DNA packaging. No effect on ATPase activity." evidence="5">
    <original>R</original>
    <variation>A</variation>
    <location>
        <position position="122"/>
    </location>
</feature>
<feature type="mutagenesis site" description="2.5 fold reduced DNA packaging. No effect on ATPase activity." evidence="5">
    <original>K</original>
    <variation>A</variation>
    <location>
        <position position="124"/>
    </location>
</feature>
<feature type="mutagenesis site" description="Complete loss of DNA packaging." evidence="5">
    <original>R</original>
    <variation>A</variation>
    <variation>K</variation>
    <location>
        <position position="146"/>
    </location>
</feature>
<feature type="mutagenesis site" description="Decreased packaging." evidence="7">
    <original>R</original>
    <variation>Q</variation>
    <location>
        <position position="327"/>
    </location>
</feature>
<feature type="mutagenesis site" description="Complete loss of packaging." evidence="7">
    <original>K</original>
    <variation>N</variation>
    <location>
        <position position="328"/>
    </location>
</feature>
<feature type="mutagenesis site" description="Decreased packaging." evidence="7">
    <original>R</original>
    <variation>Q</variation>
    <location>
        <position position="330"/>
    </location>
</feature>
<feature type="helix" evidence="19">
    <location>
        <begin position="10"/>
        <end position="14"/>
    </location>
</feature>
<feature type="strand" evidence="19">
    <location>
        <begin position="18"/>
        <end position="22"/>
    </location>
</feature>
<feature type="helix" evidence="19">
    <location>
        <begin position="29"/>
        <end position="45"/>
    </location>
</feature>
<feature type="strand" evidence="19">
    <location>
        <begin position="48"/>
        <end position="55"/>
    </location>
</feature>
<feature type="helix" evidence="19">
    <location>
        <begin position="56"/>
        <end position="59"/>
    </location>
</feature>
<feature type="helix" evidence="19">
    <location>
        <begin position="62"/>
        <end position="68"/>
    </location>
</feature>
<feature type="helix" evidence="19">
    <location>
        <begin position="70"/>
        <end position="72"/>
    </location>
</feature>
<feature type="strand" evidence="19">
    <location>
        <begin position="78"/>
        <end position="81"/>
    </location>
</feature>
<feature type="strand" evidence="19">
    <location>
        <begin position="84"/>
        <end position="87"/>
    </location>
</feature>
<feature type="strand" evidence="19">
    <location>
        <begin position="90"/>
        <end position="97"/>
    </location>
</feature>
<feature type="helix" evidence="19">
    <location>
        <begin position="98"/>
        <end position="100"/>
    </location>
</feature>
<feature type="helix" evidence="19">
    <location>
        <begin position="101"/>
        <end position="104"/>
    </location>
</feature>
<feature type="strand" evidence="19">
    <location>
        <begin position="110"/>
        <end position="118"/>
    </location>
</feature>
<feature type="helix" evidence="19">
    <location>
        <begin position="133"/>
        <end position="144"/>
    </location>
</feature>
<feature type="strand" evidence="19">
    <location>
        <begin position="152"/>
        <end position="156"/>
    </location>
</feature>
<feature type="strand" evidence="19">
    <location>
        <begin position="162"/>
        <end position="164"/>
    </location>
</feature>
<feature type="helix" evidence="19">
    <location>
        <begin position="165"/>
        <end position="170"/>
    </location>
</feature>
<feature type="strand" evidence="19">
    <location>
        <begin position="179"/>
        <end position="182"/>
    </location>
</feature>
<feature type="strand" evidence="19">
    <location>
        <begin position="184"/>
        <end position="189"/>
    </location>
</feature>
<feature type="strand" evidence="21">
    <location>
        <begin position="239"/>
        <end position="246"/>
    </location>
</feature>
<feature type="strand" evidence="21">
    <location>
        <begin position="249"/>
        <end position="256"/>
    </location>
</feature>
<feature type="turn" evidence="21">
    <location>
        <begin position="257"/>
        <end position="260"/>
    </location>
</feature>
<feature type="strand" evidence="21">
    <location>
        <begin position="261"/>
        <end position="266"/>
    </location>
</feature>
<feature type="strand" evidence="21">
    <location>
        <begin position="275"/>
        <end position="278"/>
    </location>
</feature>
<feature type="turn" evidence="20">
    <location>
        <begin position="281"/>
        <end position="284"/>
    </location>
</feature>
<feature type="helix" evidence="20">
    <location>
        <begin position="285"/>
        <end position="287"/>
    </location>
</feature>
<feature type="turn" evidence="21">
    <location>
        <begin position="289"/>
        <end position="295"/>
    </location>
</feature>
<feature type="helix" evidence="21">
    <location>
        <begin position="297"/>
        <end position="307"/>
    </location>
</feature>
<feature type="strand" evidence="21">
    <location>
        <begin position="311"/>
        <end position="315"/>
    </location>
</feature>
<feature type="helix" evidence="21">
    <location>
        <begin position="316"/>
        <end position="328"/>
    </location>
</feature>
<organismHost>
    <name type="scientific">Bacillus subtilis</name>
    <dbReference type="NCBI Taxonomy" id="1423"/>
</organismHost>
<proteinExistence type="evidence at protein level"/>
<dbReference type="EC" id="3.6.4.-" evidence="4"/>
<dbReference type="EMBL" id="M14782">
    <property type="protein sequence ID" value="AAA32289.1"/>
    <property type="molecule type" value="Genomic_DNA"/>
</dbReference>
<dbReference type="EMBL" id="M14431">
    <property type="protein sequence ID" value="AAA88348.1"/>
    <property type="molecule type" value="Genomic_DNA"/>
</dbReference>
<dbReference type="EMBL" id="EU771092">
    <property type="protein sequence ID" value="ACE96039.1"/>
    <property type="molecule type" value="Genomic_DNA"/>
</dbReference>
<dbReference type="PIR" id="B33078">
    <property type="entry name" value="WMBP26"/>
</dbReference>
<dbReference type="RefSeq" id="YP_002004545.1">
    <property type="nucleotide sequence ID" value="NC_011048.1"/>
</dbReference>
<dbReference type="PDB" id="5HD9">
    <property type="method" value="X-ray"/>
    <property type="resolution" value="1.94 A"/>
    <property type="chains" value="A=4-197"/>
</dbReference>
<dbReference type="PDB" id="6V1W">
    <property type="method" value="NMR"/>
    <property type="chains" value="A=222-332"/>
</dbReference>
<dbReference type="PDB" id="7CNB">
    <property type="method" value="X-ray"/>
    <property type="resolution" value="2.32 A"/>
    <property type="chains" value="A=226-332"/>
</dbReference>
<dbReference type="PDB" id="7JQQ">
    <property type="method" value="EM"/>
    <property type="resolution" value="4.10 A"/>
    <property type="chains" value="A/B/C/D/E=1-332"/>
</dbReference>
<dbReference type="PDBsum" id="5HD9"/>
<dbReference type="PDBsum" id="6V1W"/>
<dbReference type="PDBsum" id="7CNB"/>
<dbReference type="PDBsum" id="7JQQ"/>
<dbReference type="EMDB" id="EMD-22441"/>
<dbReference type="SMR" id="P11014"/>
<dbReference type="GeneID" id="6446516"/>
<dbReference type="KEGG" id="vg:6446516"/>
<dbReference type="Proteomes" id="UP000001207">
    <property type="component" value="Genome"/>
</dbReference>
<dbReference type="GO" id="GO:0005524">
    <property type="term" value="F:ATP binding"/>
    <property type="evidence" value="ECO:0007669"/>
    <property type="project" value="UniProtKB-KW"/>
</dbReference>
<dbReference type="GO" id="GO:0016887">
    <property type="term" value="F:ATP hydrolysis activity"/>
    <property type="evidence" value="ECO:0000314"/>
    <property type="project" value="UniProtKB"/>
</dbReference>
<dbReference type="GO" id="GO:0003677">
    <property type="term" value="F:DNA binding"/>
    <property type="evidence" value="ECO:0007669"/>
    <property type="project" value="UniProtKB-KW"/>
</dbReference>
<dbReference type="GO" id="GO:0003723">
    <property type="term" value="F:RNA binding"/>
    <property type="evidence" value="ECO:0000314"/>
    <property type="project" value="UniProtKB"/>
</dbReference>
<dbReference type="GO" id="GO:0019073">
    <property type="term" value="P:viral DNA genome packaging"/>
    <property type="evidence" value="ECO:0000314"/>
    <property type="project" value="UniProtKB"/>
</dbReference>
<dbReference type="InterPro" id="IPR027417">
    <property type="entry name" value="P-loop_NTPase"/>
</dbReference>
<dbReference type="InterPro" id="IPR008784">
    <property type="entry name" value="Podovirus_Gp16"/>
</dbReference>
<dbReference type="Pfam" id="PF05894">
    <property type="entry name" value="Podovirus_Gp16"/>
    <property type="match status" value="1"/>
</dbReference>
<dbReference type="SUPFAM" id="SSF52540">
    <property type="entry name" value="P-loop containing nucleoside triphosphate hydrolases"/>
    <property type="match status" value="1"/>
</dbReference>
<comment type="function">
    <text evidence="2 3 6 9 14">ATPase required for the genome encapsidation reaction (PubMed:3879485). Part of the active packaging motor via the binding to the packaging RNA (pRNA), itself fixed to the head-tail connector at the unique portal vertex of the prohead (PubMed:11130079, PubMed:18674782). Binds and supercoils the pre-formed, unit-length DNA bound to gp3 to produce an initiation complex for DNA packaging (PubMed:2960820). Provides the energy to actively pump the viral DNA into the prohead. Approximately one molecule of ATP is used in the packaging of 2 bp of viral DNA (PubMed:2960820). ATP hydrolysis results in a conformational change that causes the arginine/lysine finger of one subunit to move into the active site of its neighbor, where it interacts with the negatively charged oxygens on the gamma-phosphate of ATP (Probable). After packaging, the ATPase and the pRNA are released from the prohead.</text>
</comment>
<comment type="catalytic activity">
    <reaction evidence="4">
        <text>ATP + H2O = ADP + phosphate + H(+)</text>
        <dbReference type="Rhea" id="RHEA:13065"/>
        <dbReference type="ChEBI" id="CHEBI:15377"/>
        <dbReference type="ChEBI" id="CHEBI:15378"/>
        <dbReference type="ChEBI" id="CHEBI:30616"/>
        <dbReference type="ChEBI" id="CHEBI:43474"/>
        <dbReference type="ChEBI" id="CHEBI:456216"/>
    </reaction>
</comment>
<comment type="subunit">
    <text evidence="3 5 8 10">Homopentamer (PubMed:26904950, PubMed:33962953). Interacts with the packaging RNA (pRNA) (PubMed:18674782). Part of a DNA-gp3-gp16 complex (PubMed:9086269).</text>
</comment>
<comment type="domain">
    <text evidence="7">The N-terminus contains the ATPase activity and the C-terminus (CTD) binds DNA (PubMed:33089330). The CTD is likely a vestigial nuclease that has lost its hydrolytic capability since Phi-29 is not a concatamer that neads cleavage (PubMed:33089330).</text>
</comment>
<comment type="similarity">
    <text evidence="13">Belongs to the phi29likevirus gp16 family.</text>
</comment>
<name>PKG16_BPPH2</name>